<protein>
    <recommendedName>
        <fullName evidence="5">Telomerase-associated protein of 75 kDa</fullName>
        <shortName evidence="5">p75</shortName>
    </recommendedName>
</protein>
<accession>A0PGB2</accession>
<accession>I7MHB0</accession>
<evidence type="ECO:0000269" key="1">
    <source>
    </source>
</evidence>
<evidence type="ECO:0000269" key="2">
    <source>
    </source>
</evidence>
<evidence type="ECO:0000269" key="3">
    <source>
    </source>
</evidence>
<evidence type="ECO:0000269" key="4">
    <source>
    </source>
</evidence>
<evidence type="ECO:0000303" key="5">
    <source>
    </source>
</evidence>
<evidence type="ECO:0000305" key="6"/>
<evidence type="ECO:0000305" key="7">
    <source>
    </source>
</evidence>
<evidence type="ECO:0000312" key="8">
    <source>
        <dbReference type="EMBL" id="EAR87391.2"/>
    </source>
</evidence>
<evidence type="ECO:0007829" key="9">
    <source>
        <dbReference type="PDB" id="7UY5"/>
    </source>
</evidence>
<evidence type="ECO:0007829" key="10">
    <source>
        <dbReference type="PDB" id="7X5C"/>
    </source>
</evidence>
<feature type="chain" id="PRO_0000449911" description="Telomerase-associated protein of 75 kDa">
    <location>
        <begin position="1"/>
        <end position="622"/>
    </location>
</feature>
<feature type="helix" evidence="9">
    <location>
        <begin position="8"/>
        <end position="31"/>
    </location>
</feature>
<feature type="strand" evidence="10">
    <location>
        <begin position="44"/>
        <end position="46"/>
    </location>
</feature>
<feature type="strand" evidence="9">
    <location>
        <begin position="52"/>
        <end position="57"/>
    </location>
</feature>
<feature type="strand" evidence="9">
    <location>
        <begin position="60"/>
        <end position="86"/>
    </location>
</feature>
<feature type="strand" evidence="9">
    <location>
        <begin position="88"/>
        <end position="93"/>
    </location>
</feature>
<feature type="strand" evidence="9">
    <location>
        <begin position="96"/>
        <end position="99"/>
    </location>
</feature>
<feature type="helix" evidence="9">
    <location>
        <begin position="102"/>
        <end position="106"/>
    </location>
</feature>
<feature type="strand" evidence="9">
    <location>
        <begin position="114"/>
        <end position="120"/>
    </location>
</feature>
<feature type="helix" evidence="10">
    <location>
        <begin position="136"/>
        <end position="138"/>
    </location>
</feature>
<feature type="strand" evidence="10">
    <location>
        <begin position="151"/>
        <end position="155"/>
    </location>
</feature>
<feature type="strand" evidence="9">
    <location>
        <begin position="161"/>
        <end position="163"/>
    </location>
</feature>
<feature type="strand" evidence="10">
    <location>
        <begin position="165"/>
        <end position="167"/>
    </location>
</feature>
<feature type="helix" evidence="9">
    <location>
        <begin position="168"/>
        <end position="178"/>
    </location>
</feature>
<feature type="helix" evidence="9">
    <location>
        <begin position="191"/>
        <end position="196"/>
    </location>
</feature>
<feature type="strand" evidence="9">
    <location>
        <begin position="200"/>
        <end position="202"/>
    </location>
</feature>
<feature type="helix" evidence="9">
    <location>
        <begin position="204"/>
        <end position="207"/>
    </location>
</feature>
<feature type="strand" evidence="9">
    <location>
        <begin position="213"/>
        <end position="226"/>
    </location>
</feature>
<feature type="helix" evidence="9">
    <location>
        <begin position="232"/>
        <end position="235"/>
    </location>
</feature>
<feature type="strand" evidence="9">
    <location>
        <begin position="238"/>
        <end position="240"/>
    </location>
</feature>
<feature type="turn" evidence="9">
    <location>
        <begin position="245"/>
        <end position="247"/>
    </location>
</feature>
<feature type="strand" evidence="9">
    <location>
        <begin position="248"/>
        <end position="256"/>
    </location>
</feature>
<feature type="strand" evidence="9">
    <location>
        <begin position="264"/>
        <end position="274"/>
    </location>
</feature>
<feature type="helix" evidence="9">
    <location>
        <begin position="276"/>
        <end position="285"/>
    </location>
</feature>
<feature type="strand" evidence="9">
    <location>
        <begin position="291"/>
        <end position="301"/>
    </location>
</feature>
<feature type="helix" evidence="9">
    <location>
        <begin position="303"/>
        <end position="305"/>
    </location>
</feature>
<feature type="strand" evidence="9">
    <location>
        <begin position="307"/>
        <end position="313"/>
    </location>
</feature>
<feature type="helix" evidence="9">
    <location>
        <begin position="323"/>
        <end position="327"/>
    </location>
</feature>
<feature type="strand" evidence="9">
    <location>
        <begin position="335"/>
        <end position="337"/>
    </location>
</feature>
<feature type="helix" evidence="9">
    <location>
        <begin position="343"/>
        <end position="350"/>
    </location>
</feature>
<feature type="helix" evidence="9">
    <location>
        <begin position="353"/>
        <end position="358"/>
    </location>
</feature>
<feature type="helix" evidence="9">
    <location>
        <begin position="366"/>
        <end position="368"/>
    </location>
</feature>
<feature type="strand" evidence="9">
    <location>
        <begin position="372"/>
        <end position="375"/>
    </location>
</feature>
<feature type="strand" evidence="9">
    <location>
        <begin position="380"/>
        <end position="397"/>
    </location>
</feature>
<feature type="strand" evidence="9">
    <location>
        <begin position="399"/>
        <end position="402"/>
    </location>
</feature>
<feature type="strand" evidence="9">
    <location>
        <begin position="413"/>
        <end position="415"/>
    </location>
</feature>
<feature type="strand" evidence="9">
    <location>
        <begin position="421"/>
        <end position="435"/>
    </location>
</feature>
<feature type="strand" evidence="9">
    <location>
        <begin position="439"/>
        <end position="444"/>
    </location>
</feature>
<feature type="helix" evidence="9">
    <location>
        <begin position="447"/>
        <end position="452"/>
    </location>
</feature>
<feature type="helix" evidence="9">
    <location>
        <begin position="457"/>
        <end position="469"/>
    </location>
</feature>
<feature type="strand" evidence="9">
    <location>
        <begin position="472"/>
        <end position="476"/>
    </location>
</feature>
<feature type="helix" evidence="9">
    <location>
        <begin position="486"/>
        <end position="497"/>
    </location>
</feature>
<feature type="strand" evidence="9">
    <location>
        <begin position="501"/>
        <end position="509"/>
    </location>
</feature>
<feature type="strand" evidence="9">
    <location>
        <begin position="568"/>
        <end position="571"/>
    </location>
</feature>
<feature type="strand" evidence="9">
    <location>
        <begin position="584"/>
        <end position="586"/>
    </location>
</feature>
<feature type="strand" evidence="9">
    <location>
        <begin position="588"/>
        <end position="594"/>
    </location>
</feature>
<feature type="helix" evidence="9">
    <location>
        <begin position="602"/>
        <end position="621"/>
    </location>
</feature>
<sequence length="622" mass="73814">MEIEEDLNLKILEDVKKLYLQSFDYIKNGISSSLPSDKKFLADDDIDLSRITFLYKFISVNPTLLLINEKTQAKRRIFQGEYLYGKKKIQFNIIAKNLEIERELIQFFKKPYQCYIMHNVQVFQMLNKNKNNNVVEFMDSEDLQSSVDCQLYYLIDESSHVLEDDSMDFISTLTRLSDSFNSNEFVFETNYSIQISQMPKPLNTTHFKLLQPKVVNSFEGVILQVQEGKNILQIEELIDQVYLNSRRDRFYILKVANGKNYMDFIEVYLVYDNEDQEAKQQLQFYLKPFQRILIFQSLKHFTKNLKLFMISFFYSSGVQPNNSNVKNFLVSHKGVEFFSRFDIQKNELLCKDLIKSYNKLPLSNISKLLEDEGVMIRSNMKFQVRVKKVKYFKIRLNCLNCKQEWTVGLKNCINCKGQQSYISYNIQVLVQDQHFLEQQAYIYLYDDLAAQFFNITESEKKELHLHLTKNETFIQLYYSFNKDYPLSIIKFKDKIFNKDITNCIVAYPFADIDNKIFNSQQQIIQDENLRIESEKFIQNFTEDNNLQESKLYYEKFKSKNKQQIFVNGTYISTNYSQGQKICLKPIPCLKVMYVFPQEDIKLSALKIIEEINQLKIQIDQLN</sequence>
<comment type="function">
    <text evidence="7">Component of a CST-like subcomplex of the holoenzyme telomerase ribonucleoprotein complex, which stimulates telomerase complementary-strand synthesis (Probable). Telomerase is an essential ribonucleoprotein enzyme that copies new telomeric repeats onto chromosome ends by repetitively synthesizing the short telomere-repeat sequence 5'-TTGGGG-3' using an RNA template component TER (Probable). The CST-like subcomplex (also named 7-4-1) binds telomeric single-stranded DNA and coordinates telomere G-strand and C-strand synthesis (Probable).</text>
</comment>
<comment type="subunit">
    <text evidence="1 2 3 4">Component of the telomerase holoenzyme complex, composed of the catalytic core (the catalytic subunit TERT, the telomerase RNA template component TER and TAP65/p65), which is associated with two heterotrimeric subcomplexes: (i) the replication protein A (RPA)-related subcomplex, composed of TEB1, RPA2/TEB2 and RPA3/TEB3 and (ii) the CST-like subcomplex, composed of TAP75/p75, TAP45/p45 and TAP19/p19 (PubMed:17220281, PubMed:19941821, PubMed:23552895, PubMed:26472759). TEB1 and the CST-like subcomplex are tethered to the catalytic core by TAP50/p50 (PubMed:19941821, PubMed:23552895, PubMed:26472759).</text>
</comment>
<comment type="subcellular location">
    <subcellularLocation>
        <location evidence="6">Chromosome</location>
        <location evidence="6">Telomere</location>
    </subcellularLocation>
</comment>
<comment type="disruption phenotype">
    <text evidence="1">Telomere shortening without affecting the accumulation of TER or TERT.</text>
</comment>
<proteinExistence type="evidence at protein level"/>
<keyword id="KW-0002">3D-structure</keyword>
<keyword id="KW-0158">Chromosome</keyword>
<keyword id="KW-1185">Reference proteome</keyword>
<keyword id="KW-0779">Telomere</keyword>
<gene>
    <name evidence="5" type="primary">TAP75</name>
    <name evidence="8" type="ORF">TTHERM_00059040</name>
</gene>
<organism>
    <name type="scientific">Tetrahymena thermophila (strain SB210)</name>
    <dbReference type="NCBI Taxonomy" id="312017"/>
    <lineage>
        <taxon>Eukaryota</taxon>
        <taxon>Sar</taxon>
        <taxon>Alveolata</taxon>
        <taxon>Ciliophora</taxon>
        <taxon>Intramacronucleata</taxon>
        <taxon>Oligohymenophorea</taxon>
        <taxon>Hymenostomatida</taxon>
        <taxon>Tetrahymenina</taxon>
        <taxon>Tetrahymenidae</taxon>
        <taxon>Tetrahymena</taxon>
    </lineage>
</organism>
<name>TAP75_TETTS</name>
<dbReference type="EMBL" id="AY522576">
    <property type="protein sequence ID" value="AAS97866.1"/>
    <property type="molecule type" value="mRNA"/>
</dbReference>
<dbReference type="EMBL" id="GG662853">
    <property type="protein sequence ID" value="EAR87391.2"/>
    <property type="molecule type" value="Genomic_DNA"/>
</dbReference>
<dbReference type="RefSeq" id="XP_001007636.2">
    <property type="nucleotide sequence ID" value="XM_001007636.3"/>
</dbReference>
<dbReference type="PDB" id="7UY5">
    <property type="method" value="EM"/>
    <property type="resolution" value="3.50 A"/>
    <property type="chains" value="I=1-622"/>
</dbReference>
<dbReference type="PDB" id="7UY7">
    <property type="method" value="EM"/>
    <property type="resolution" value="4.20 A"/>
    <property type="chains" value="A=1-622"/>
</dbReference>
<dbReference type="PDB" id="7X5C">
    <property type="method" value="NMR"/>
    <property type="chains" value="A=1-179"/>
</dbReference>
<dbReference type="PDBsum" id="7UY5"/>
<dbReference type="PDBsum" id="7UY7"/>
<dbReference type="PDBsum" id="7X5C"/>
<dbReference type="EMDB" id="EMD-26863"/>
<dbReference type="EMDB" id="EMD-26866"/>
<dbReference type="SMR" id="A0PGB2"/>
<dbReference type="DIP" id="DIP-60202N"/>
<dbReference type="DIP" id="DIP-61866N"/>
<dbReference type="IntAct" id="A0PGB2">
    <property type="interactions" value="5"/>
</dbReference>
<dbReference type="STRING" id="312017.I7MHB0"/>
<dbReference type="GeneID" id="7829531"/>
<dbReference type="KEGG" id="tet:TTHERM_00059040"/>
<dbReference type="InParanoid" id="A0PGB2"/>
<dbReference type="Proteomes" id="UP000009168">
    <property type="component" value="Unassembled WGS sequence"/>
</dbReference>
<dbReference type="GO" id="GO:0000781">
    <property type="term" value="C:chromosome, telomeric region"/>
    <property type="evidence" value="ECO:0007669"/>
    <property type="project" value="UniProtKB-SubCell"/>
</dbReference>
<dbReference type="GO" id="GO:0005697">
    <property type="term" value="C:telomerase holoenzyme complex"/>
    <property type="evidence" value="ECO:0000314"/>
    <property type="project" value="UniProtKB"/>
</dbReference>
<reference key="1">
    <citation type="journal article" date="2007" name="Mol. Cell. Biol.">
        <title>Positive and negative regulation of Tetrahymena telomerase holoenzyme.</title>
        <authorList>
            <person name="Witkin K.L."/>
            <person name="Prathapam R."/>
            <person name="Collins K."/>
        </authorList>
    </citation>
    <scope>NUCLEOTIDE SEQUENCE [MRNA]</scope>
    <scope>IDENTIFICATION IN THE TELOMERASE HOLOENZYME</scope>
    <scope>DISRUPTION PHENOTYPE</scope>
</reference>
<reference key="2">
    <citation type="journal article" date="2006" name="PLoS Biol.">
        <title>Macronuclear genome sequence of the ciliate Tetrahymena thermophila, a model eukaryote.</title>
        <authorList>
            <person name="Eisen J.A."/>
            <person name="Coyne R.S."/>
            <person name="Wu M."/>
            <person name="Wu D."/>
            <person name="Thiagarajan M."/>
            <person name="Wortman J.R."/>
            <person name="Badger J.H."/>
            <person name="Ren Q."/>
            <person name="Amedeo P."/>
            <person name="Jones K.M."/>
            <person name="Tallon L.J."/>
            <person name="Delcher A.L."/>
            <person name="Salzberg S.L."/>
            <person name="Silva J.C."/>
            <person name="Haas B.J."/>
            <person name="Majoros W.H."/>
            <person name="Farzad M."/>
            <person name="Carlton J.M."/>
            <person name="Smith R.K. Jr."/>
            <person name="Garg J."/>
            <person name="Pearlman R.E."/>
            <person name="Karrer K.M."/>
            <person name="Sun L."/>
            <person name="Manning G."/>
            <person name="Elde N.C."/>
            <person name="Turkewitz A.P."/>
            <person name="Asai D.J."/>
            <person name="Wilkes D.E."/>
            <person name="Wang Y."/>
            <person name="Cai H."/>
            <person name="Collins K."/>
            <person name="Stewart B.A."/>
            <person name="Lee S.R."/>
            <person name="Wilamowska K."/>
            <person name="Weinberg Z."/>
            <person name="Ruzzo W.L."/>
            <person name="Wloga D."/>
            <person name="Gaertig J."/>
            <person name="Frankel J."/>
            <person name="Tsao C.-C."/>
            <person name="Gorovsky M.A."/>
            <person name="Keeling P.J."/>
            <person name="Waller R.F."/>
            <person name="Patron N.J."/>
            <person name="Cherry J.M."/>
            <person name="Stover N.A."/>
            <person name="Krieger C.J."/>
            <person name="del Toro C."/>
            <person name="Ryder H.F."/>
            <person name="Williamson S.C."/>
            <person name="Barbeau R.A."/>
            <person name="Hamilton E.P."/>
            <person name="Orias E."/>
        </authorList>
    </citation>
    <scope>NUCLEOTIDE SEQUENCE [LARGE SCALE GENOMIC DNA]</scope>
    <source>
        <strain>SB210</strain>
    </source>
</reference>
<reference key="3">
    <citation type="journal article" date="2009" name="Mol. Cell">
        <title>An RPA-related sequence-specific DNA-binding subunit of telomerase holoenzyme is required for elongation processivity and telomere maintenance.</title>
        <authorList>
            <person name="Min B."/>
            <person name="Collins K."/>
        </authorList>
    </citation>
    <scope>IDENTIFICATION IN THE TELOMERASE HOLOENZYME</scope>
</reference>
<reference key="4">
    <citation type="journal article" date="2015" name="Nat. Struct. Mol. Biol.">
        <title>The Tetrahymena telomerase p75-p45-p19 subcomplex is a unique CST complex.</title>
        <authorList>
            <person name="Wan B."/>
            <person name="Tang T."/>
            <person name="Upton H."/>
            <person name="Shuai J."/>
            <person name="Zhou Y."/>
            <person name="Li S."/>
            <person name="Chen J."/>
            <person name="Brunzelle J.S."/>
            <person name="Zeng Z."/>
            <person name="Collins K."/>
            <person name="Wu J."/>
            <person name="Lei M."/>
        </authorList>
    </citation>
    <scope>FUNCTION</scope>
</reference>
<reference key="5">
    <citation type="journal article" date="2013" name="Nature">
        <title>The architecture of Tetrahymena telomerase holoenzyme.</title>
        <authorList>
            <person name="Jiang J."/>
            <person name="Miracco E.J."/>
            <person name="Hong K."/>
            <person name="Eckert B."/>
            <person name="Chan H."/>
            <person name="Cash D.D."/>
            <person name="Min B."/>
            <person name="Zhou Z.H."/>
            <person name="Collins K."/>
            <person name="Feigon J."/>
        </authorList>
    </citation>
    <scope>STRUCTURE BY ELECTRON MICROSCOPY OF THE TELOMERASE HOLOENZYME</scope>
</reference>
<reference key="6">
    <citation type="journal article" date="2015" name="Science">
        <title>Structure of Tetrahymena telomerase reveals previously unknown subunits, functions, and interactions.</title>
        <authorList>
            <person name="Jiang J."/>
            <person name="Chan H."/>
            <person name="Cash D.D."/>
            <person name="Miracco E.J."/>
            <person name="Ogorzalek Loo R.R."/>
            <person name="Upton H.E."/>
            <person name="Cascio D."/>
            <person name="O'Brien Johnson R."/>
            <person name="Collins K."/>
            <person name="Loo J.A."/>
            <person name="Zhou Z.H."/>
            <person name="Feigon J."/>
        </authorList>
    </citation>
    <scope>STRUCTURE BY ELECTRON MICROSCOPY OF THE TELOMERASE HOLOENZYME</scope>
</reference>